<evidence type="ECO:0000255" key="1">
    <source>
        <dbReference type="HAMAP-Rule" id="MF_01187"/>
    </source>
</evidence>
<sequence length="68" mass="7409">MDARLLEILVCPICKGPLHYDRGAQELVCHADKLAYPIRDGIPVMLVDEARQTVEGTPVDPAGPARGR</sequence>
<name>Y3347_BURM9</name>
<organism>
    <name type="scientific">Burkholderia mallei (strain NCTC 10229)</name>
    <dbReference type="NCBI Taxonomy" id="412022"/>
    <lineage>
        <taxon>Bacteria</taxon>
        <taxon>Pseudomonadati</taxon>
        <taxon>Pseudomonadota</taxon>
        <taxon>Betaproteobacteria</taxon>
        <taxon>Burkholderiales</taxon>
        <taxon>Burkholderiaceae</taxon>
        <taxon>Burkholderia</taxon>
        <taxon>pseudomallei group</taxon>
    </lineage>
</organism>
<accession>A2S514</accession>
<comment type="similarity">
    <text evidence="1">Belongs to the UPF0434 family.</text>
</comment>
<protein>
    <recommendedName>
        <fullName evidence="1">UPF0434 protein BMA10229_A1047</fullName>
    </recommendedName>
</protein>
<gene>
    <name type="ordered locus">BMA10229_A1047</name>
</gene>
<proteinExistence type="inferred from homology"/>
<feature type="chain" id="PRO_1000065832" description="UPF0434 protein BMA10229_A1047">
    <location>
        <begin position="1"/>
        <end position="68"/>
    </location>
</feature>
<dbReference type="EMBL" id="CP000546">
    <property type="protein sequence ID" value="ABN01515.1"/>
    <property type="molecule type" value="Genomic_DNA"/>
</dbReference>
<dbReference type="RefSeq" id="WP_004196455.1">
    <property type="nucleotide sequence ID" value="NC_008836.1"/>
</dbReference>
<dbReference type="SMR" id="A2S514"/>
<dbReference type="KEGG" id="bml:BMA10229_A1047"/>
<dbReference type="HOGENOM" id="CLU_155659_3_0_4"/>
<dbReference type="Proteomes" id="UP000002283">
    <property type="component" value="Chromosome I"/>
</dbReference>
<dbReference type="GO" id="GO:0005829">
    <property type="term" value="C:cytosol"/>
    <property type="evidence" value="ECO:0007669"/>
    <property type="project" value="TreeGrafter"/>
</dbReference>
<dbReference type="FunFam" id="2.20.25.10:FF:000002">
    <property type="entry name" value="UPF0434 protein YcaR"/>
    <property type="match status" value="1"/>
</dbReference>
<dbReference type="Gene3D" id="2.20.25.10">
    <property type="match status" value="1"/>
</dbReference>
<dbReference type="HAMAP" id="MF_01187">
    <property type="entry name" value="UPF0434"/>
    <property type="match status" value="1"/>
</dbReference>
<dbReference type="InterPro" id="IPR005651">
    <property type="entry name" value="Trm112-like"/>
</dbReference>
<dbReference type="NCBIfam" id="TIGR01053">
    <property type="entry name" value="LSD1"/>
    <property type="match status" value="1"/>
</dbReference>
<dbReference type="PANTHER" id="PTHR33505:SF4">
    <property type="entry name" value="PROTEIN PREY, MITOCHONDRIAL"/>
    <property type="match status" value="1"/>
</dbReference>
<dbReference type="PANTHER" id="PTHR33505">
    <property type="entry name" value="ZGC:162634"/>
    <property type="match status" value="1"/>
</dbReference>
<dbReference type="Pfam" id="PF03966">
    <property type="entry name" value="Trm112p"/>
    <property type="match status" value="1"/>
</dbReference>
<dbReference type="SUPFAM" id="SSF158997">
    <property type="entry name" value="Trm112p-like"/>
    <property type="match status" value="1"/>
</dbReference>
<reference key="1">
    <citation type="journal article" date="2010" name="Genome Biol. Evol.">
        <title>Continuing evolution of Burkholderia mallei through genome reduction and large-scale rearrangements.</title>
        <authorList>
            <person name="Losada L."/>
            <person name="Ronning C.M."/>
            <person name="DeShazer D."/>
            <person name="Woods D."/>
            <person name="Fedorova N."/>
            <person name="Kim H.S."/>
            <person name="Shabalina S.A."/>
            <person name="Pearson T.R."/>
            <person name="Brinkac L."/>
            <person name="Tan P."/>
            <person name="Nandi T."/>
            <person name="Crabtree J."/>
            <person name="Badger J."/>
            <person name="Beckstrom-Sternberg S."/>
            <person name="Saqib M."/>
            <person name="Schutzer S.E."/>
            <person name="Keim P."/>
            <person name="Nierman W.C."/>
        </authorList>
    </citation>
    <scope>NUCLEOTIDE SEQUENCE [LARGE SCALE GENOMIC DNA]</scope>
    <source>
        <strain>NCTC 10229</strain>
    </source>
</reference>